<accession>V5LU01</accession>
<feature type="signal peptide" evidence="1">
    <location>
        <begin position="1"/>
        <end position="22"/>
    </location>
</feature>
<feature type="propeptide" id="PRO_0000447673" description="Activation peptide" evidence="16">
    <location>
        <begin position="23"/>
        <end position="108"/>
    </location>
</feature>
<feature type="chain" id="PRO_5018702241" description="Cysteine protease Amb a 11.0101" evidence="16">
    <location>
        <begin position="109"/>
        <end position="370"/>
    </location>
</feature>
<feature type="propeptide" id="PRO_0000447674" description="Removed in mature form" evidence="16">
    <location>
        <begin position="371"/>
        <end position="386"/>
    </location>
</feature>
<feature type="region of interest" description="T-cell epitope. MHC class II peptide able to activate CD(4+) T cells of the ragweed pollen-allergic patients indicated by significantly increased IL-2 production compared to non-allergic individuals. Not recognized by IgE of the patients allergic to ragweed pollen" evidence="9">
    <location>
        <begin position="6"/>
        <end position="20"/>
    </location>
</feature>
<feature type="region of interest" description="B-cell epitope. Binds to IgE of the patients allergic to ragweed pollen" evidence="9">
    <location>
        <begin position="173"/>
        <end position="186"/>
    </location>
</feature>
<feature type="region of interest" description="Disordered" evidence="6">
    <location>
        <begin position="340"/>
        <end position="377"/>
    </location>
</feature>
<feature type="compositionally biased region" description="Basic and acidic residues" evidence="6">
    <location>
        <begin position="350"/>
        <end position="370"/>
    </location>
</feature>
<feature type="active site" evidence="3 8">
    <location>
        <position position="155"/>
    </location>
</feature>
<feature type="active site" evidence="4 17">
    <location>
        <position position="289"/>
    </location>
</feature>
<feature type="active site" evidence="5 17">
    <location>
        <position position="310"/>
    </location>
</feature>
<feature type="glycosylation site" description="N-linked (GlcNAc...) (complex) asparagine" evidence="2 7">
    <location>
        <position position="127"/>
    </location>
</feature>
<feature type="disulfide bond" evidence="8 19 20">
    <location>
        <begin position="152"/>
        <end position="193"/>
    </location>
</feature>
<feature type="disulfide bond" evidence="8 19 20">
    <location>
        <begin position="186"/>
        <end position="226"/>
    </location>
</feature>
<feature type="disulfide bond" evidence="8 19 20">
    <location>
        <begin position="283"/>
        <end position="334"/>
    </location>
</feature>
<feature type="mutagenesis site" description="Loss of catalytic activity. Loss of protein maturation in vitro." evidence="8">
    <original>C</original>
    <variation>S</variation>
    <location>
        <position position="155"/>
    </location>
</feature>
<feature type="mutagenesis site" description="No effect in protein maturation in vitro." evidence="8">
    <location>
        <begin position="371"/>
        <end position="386"/>
    </location>
</feature>
<feature type="helix" evidence="21">
    <location>
        <begin position="27"/>
        <end position="31"/>
    </location>
</feature>
<feature type="helix" evidence="21">
    <location>
        <begin position="33"/>
        <end position="46"/>
    </location>
</feature>
<feature type="helix" evidence="21">
    <location>
        <begin position="54"/>
        <end position="70"/>
    </location>
</feature>
<feature type="strand" evidence="21">
    <location>
        <begin position="76"/>
        <end position="79"/>
    </location>
</feature>
<feature type="turn" evidence="21">
    <location>
        <begin position="83"/>
        <end position="86"/>
    </location>
</feature>
<feature type="helix" evidence="21">
    <location>
        <begin position="89"/>
        <end position="96"/>
    </location>
</feature>
<feature type="helix" evidence="21">
    <location>
        <begin position="101"/>
        <end position="108"/>
    </location>
</feature>
<feature type="strand" evidence="22">
    <location>
        <begin position="117"/>
        <end position="121"/>
    </location>
</feature>
<feature type="turn" evidence="21">
    <location>
        <begin position="124"/>
        <end position="127"/>
    </location>
</feature>
<feature type="strand" evidence="22">
    <location>
        <begin position="133"/>
        <end position="136"/>
    </location>
</feature>
<feature type="helix" evidence="21">
    <location>
        <begin position="137"/>
        <end position="140"/>
    </location>
</feature>
<feature type="helix" evidence="21">
    <location>
        <begin position="155"/>
        <end position="172"/>
    </location>
</feature>
<feature type="helix" evidence="21">
    <location>
        <begin position="180"/>
        <end position="186"/>
    </location>
</feature>
<feature type="turn" evidence="22">
    <location>
        <begin position="188"/>
        <end position="191"/>
    </location>
</feature>
<feature type="helix" evidence="21">
    <location>
        <begin position="192"/>
        <end position="194"/>
    </location>
</feature>
<feature type="helix" evidence="21">
    <location>
        <begin position="198"/>
        <end position="207"/>
    </location>
</feature>
<feature type="turn" evidence="21">
    <location>
        <begin position="214"/>
        <end position="216"/>
    </location>
</feature>
<feature type="helix" evidence="21">
    <location>
        <begin position="228"/>
        <end position="230"/>
    </location>
</feature>
<feature type="strand" evidence="21">
    <location>
        <begin position="239"/>
        <end position="242"/>
    </location>
</feature>
<feature type="helix" evidence="21">
    <location>
        <begin position="248"/>
        <end position="255"/>
    </location>
</feature>
<feature type="strand" evidence="21">
    <location>
        <begin position="260"/>
        <end position="264"/>
    </location>
</feature>
<feature type="helix" evidence="21">
    <location>
        <begin position="269"/>
        <end position="272"/>
    </location>
</feature>
<feature type="strand" evidence="21">
    <location>
        <begin position="273"/>
        <end position="279"/>
    </location>
</feature>
<feature type="strand" evidence="21">
    <location>
        <begin position="289"/>
        <end position="298"/>
    </location>
</feature>
<feature type="strand" evidence="21">
    <location>
        <begin position="304"/>
        <end position="309"/>
    </location>
</feature>
<feature type="strand" evidence="21">
    <location>
        <begin position="321"/>
        <end position="329"/>
    </location>
</feature>
<feature type="helix" evidence="21">
    <location>
        <begin position="333"/>
        <end position="335"/>
    </location>
</feature>
<feature type="strand" evidence="21">
    <location>
        <begin position="338"/>
        <end position="344"/>
    </location>
</feature>
<feature type="strand" evidence="22">
    <location>
        <begin position="365"/>
        <end position="367"/>
    </location>
</feature>
<feature type="strand" evidence="22">
    <location>
        <begin position="370"/>
        <end position="372"/>
    </location>
</feature>
<feature type="strand" evidence="22">
    <location>
        <begin position="376"/>
        <end position="378"/>
    </location>
</feature>
<keyword id="KW-0002">3D-structure</keyword>
<keyword id="KW-0020">Allergen</keyword>
<keyword id="KW-0068">Autocatalytic cleavage</keyword>
<keyword id="KW-0903">Direct protein sequencing</keyword>
<keyword id="KW-1015">Disulfide bond</keyword>
<keyword id="KW-0325">Glycoprotein</keyword>
<keyword id="KW-0378">Hydrolase</keyword>
<keyword id="KW-0645">Protease</keyword>
<keyword id="KW-0732">Signal</keyword>
<keyword id="KW-0788">Thiol protease</keyword>
<keyword id="KW-0865">Zymogen</keyword>
<protein>
    <recommendedName>
        <fullName evidence="15">Cysteine protease Amb a 11.0101</fullName>
        <ecNumber evidence="7 8">3.4.22.-</ecNumber>
    </recommendedName>
    <alternativeName>
        <fullName evidence="11">Amino acid thiol protease</fullName>
    </alternativeName>
    <alternativeName>
        <fullName evidence="11 12 13 14">Pollen allergen Amb a 11</fullName>
    </alternativeName>
    <allergenName evidence="11">Amb a 11.0101</allergenName>
</protein>
<comment type="function">
    <text evidence="7 8">Cysteine protease. Hydrolyzes casein and synthetic peptide Boc-Val-Leu-Lys-7-amino-4-methylcoumarin (Boc-VLK-AMC) in vitro.</text>
</comment>
<comment type="activity regulation">
    <text evidence="7 8">Activated by L-cysteine (PubMed:27129273). Inhibited by cysteine protease inhibitor E64 (L-trans-epoxysuccinyl-leucylamide-(4-guanido)-butane) (PubMed:25865353, PubMed:27129273). Inhibited by cysteine/serine protease inhibitor leupeptin. Not inhibited by serine protease inhibitors 4-(2-aminoethyl)benzenesulfonyl fluoride hydrochloride (AEBSF) and phenylmethanesulfonyl fluoride (PMSF), metallo protease inhibitor bestatin or aspartic protease inhibitor pepstatin A (PubMed:27129273).</text>
</comment>
<comment type="biophysicochemical properties">
    <phDependence>
        <text evidence="8">Optimum pH is between 8 and 9.</text>
    </phDependence>
</comment>
<comment type="subunit">
    <text evidence="8">Homodimer.</text>
</comment>
<comment type="tissue specificity">
    <text evidence="7">Expressed in pollen (at protein and mRNA level).</text>
</comment>
<comment type="PTM">
    <text evidence="8">Autocatalytic proteolytic cleavage of N-terminal activation peptide.</text>
</comment>
<comment type="PTM">
    <text evidence="7">N-glycosylated. Glycosylation is not required for binding to IgE.</text>
</comment>
<comment type="allergen">
    <text evidence="7 8 9 10">Causes an allergic reaction in human (PubMed:25865353, PubMed:36671567, PubMed:35362839). By immunoblotting, binds to IgE in 54% of the 92 patients, including both Europeans and Americans, tested allergic to ragweed pollen (PubMed:25865353). Purified native protein under non-denaturing conditions binds to IgE in 66% of the same 92 patients tested (PubMed:25865353). By ELISA, mature recombinant protein binds to IgE in approximately 69% of the 150 ragweed pollen-allergic patients tested living in Western Romania (PubMed:36671567). Binds to IgE of mice (PubMed:27129273). In mice, the allergicity especially to the proteolytically active form of this protein leads to airway hyperresponsiveness, lung inflammation characterized by eosinophil and type 2 innate lymphoid cell (ILC2) infiltrates in bronchoalveolar lavages (BALs), and responses of the T-helper 2 (Th2) cells (PubMed:27129273). Causes activation of human basophils (PubMed:25865353). Induces in vitro degranulation of the humanized rat basophilic leukemia (hRBL) cells and release of beta-hexosaminidase from them (PubMed:36671567). Allergicity to this protein seems to be associated with more severe asthma symptoms in humans (PubMed:36671567).</text>
</comment>
<comment type="similarity">
    <text evidence="15">Belongs to the peptidase C1 family.</text>
</comment>
<sequence length="386" mass="43157">MEINKLVCFSFSLVLILGLVESFHYHERELESEEGFMGMYDRWREQHNIEMRSPERFNVFKYNVRRIHESNKMDKPYKLKVNEFADMTNLEFVNTYANSKISHFQALRGSAPGSIDTDPNKDFIYANVTKIPDKVDWREKNAVTDVKGQGGCGSCWAFAAVVALEGINAIRTGKLVKFSEQQLVDCDMTNAGCDGGLMEPAFTYVIKHGGIAPEASYPYVGKRETCDKAKIKDVLKIDGRQNVPGLDEEALRKAVAHQPVATGIQLSGHGLQFYSEGVYTGDCGTEPNHGVGIVGYGENEKGIKFWTVKNSWGPTWGEKGYIHLQRGARKEGLCGVAMHSSFPIMNDPNPPKDDPNGPKDDPDAPKDPKFKTTQRLQGIRTKLLEL</sequence>
<dbReference type="EC" id="3.4.22.-" evidence="7 8"/>
<dbReference type="EMBL" id="KF528831">
    <property type="protein sequence ID" value="AHA56102.1"/>
    <property type="molecule type" value="mRNA"/>
</dbReference>
<dbReference type="PDB" id="5EF4">
    <property type="method" value="X-ray"/>
    <property type="resolution" value="2.05 A"/>
    <property type="chains" value="A/B=23-386"/>
</dbReference>
<dbReference type="PDB" id="5EGW">
    <property type="method" value="X-ray"/>
    <property type="resolution" value="2.70 A"/>
    <property type="chains" value="A/B=23-386"/>
</dbReference>
<dbReference type="PDBsum" id="5EF4"/>
<dbReference type="PDBsum" id="5EGW"/>
<dbReference type="SMR" id="V5LU01"/>
<dbReference type="Allergome" id="11405">
    <property type="allergen name" value="Amb a 11"/>
</dbReference>
<dbReference type="Allergome" id="11406">
    <property type="allergen name" value="Amb a 11.0101"/>
</dbReference>
<dbReference type="iPTMnet" id="V5LU01"/>
<dbReference type="GO" id="GO:0004197">
    <property type="term" value="F:cysteine-type endopeptidase activity"/>
    <property type="evidence" value="ECO:0000314"/>
    <property type="project" value="UniProtKB"/>
</dbReference>
<dbReference type="GO" id="GO:0042803">
    <property type="term" value="F:protein homodimerization activity"/>
    <property type="evidence" value="ECO:0000314"/>
    <property type="project" value="UniProtKB"/>
</dbReference>
<dbReference type="GO" id="GO:0006508">
    <property type="term" value="P:proteolysis"/>
    <property type="evidence" value="ECO:0007669"/>
    <property type="project" value="UniProtKB-KW"/>
</dbReference>
<dbReference type="CDD" id="cd02248">
    <property type="entry name" value="Peptidase_C1A"/>
    <property type="match status" value="1"/>
</dbReference>
<dbReference type="FunFam" id="3.90.70.10:FF:000067">
    <property type="entry name" value="Senescence-specific cysteine protease"/>
    <property type="match status" value="1"/>
</dbReference>
<dbReference type="Gene3D" id="3.90.70.10">
    <property type="entry name" value="Cysteine proteinases"/>
    <property type="match status" value="1"/>
</dbReference>
<dbReference type="InterPro" id="IPR038765">
    <property type="entry name" value="Papain-like_cys_pep_sf"/>
</dbReference>
<dbReference type="InterPro" id="IPR025661">
    <property type="entry name" value="Pept_asp_AS"/>
</dbReference>
<dbReference type="InterPro" id="IPR000169">
    <property type="entry name" value="Pept_cys_AS"/>
</dbReference>
<dbReference type="InterPro" id="IPR013128">
    <property type="entry name" value="Peptidase_C1A"/>
</dbReference>
<dbReference type="InterPro" id="IPR000668">
    <property type="entry name" value="Peptidase_C1A_C"/>
</dbReference>
<dbReference type="InterPro" id="IPR039417">
    <property type="entry name" value="Peptidase_C1A_papain-like"/>
</dbReference>
<dbReference type="InterPro" id="IPR013201">
    <property type="entry name" value="Prot_inhib_I29"/>
</dbReference>
<dbReference type="PANTHER" id="PTHR12411">
    <property type="entry name" value="CYSTEINE PROTEASE FAMILY C1-RELATED"/>
    <property type="match status" value="1"/>
</dbReference>
<dbReference type="Pfam" id="PF08246">
    <property type="entry name" value="Inhibitor_I29"/>
    <property type="match status" value="1"/>
</dbReference>
<dbReference type="Pfam" id="PF00112">
    <property type="entry name" value="Peptidase_C1"/>
    <property type="match status" value="1"/>
</dbReference>
<dbReference type="PRINTS" id="PR00705">
    <property type="entry name" value="PAPAIN"/>
</dbReference>
<dbReference type="SMART" id="SM00848">
    <property type="entry name" value="Inhibitor_I29"/>
    <property type="match status" value="1"/>
</dbReference>
<dbReference type="SMART" id="SM00645">
    <property type="entry name" value="Pept_C1"/>
    <property type="match status" value="1"/>
</dbReference>
<dbReference type="SUPFAM" id="SSF54001">
    <property type="entry name" value="Cysteine proteinases"/>
    <property type="match status" value="1"/>
</dbReference>
<dbReference type="PROSITE" id="PS00640">
    <property type="entry name" value="THIOL_PROTEASE_ASN"/>
    <property type="match status" value="1"/>
</dbReference>
<dbReference type="PROSITE" id="PS00139">
    <property type="entry name" value="THIOL_PROTEASE_CYS"/>
    <property type="match status" value="1"/>
</dbReference>
<organism evidence="18">
    <name type="scientific">Ambrosia artemisiifolia</name>
    <name type="common">Common ragweed</name>
    <dbReference type="NCBI Taxonomy" id="4212"/>
    <lineage>
        <taxon>Eukaryota</taxon>
        <taxon>Viridiplantae</taxon>
        <taxon>Streptophyta</taxon>
        <taxon>Embryophyta</taxon>
        <taxon>Tracheophyta</taxon>
        <taxon>Spermatophyta</taxon>
        <taxon>Magnoliopsida</taxon>
        <taxon>eudicotyledons</taxon>
        <taxon>Gunneridae</taxon>
        <taxon>Pentapetalae</taxon>
        <taxon>asterids</taxon>
        <taxon>campanulids</taxon>
        <taxon>Asterales</taxon>
        <taxon>Asteraceae</taxon>
        <taxon>Asteroideae</taxon>
        <taxon>Heliantheae alliance</taxon>
        <taxon>Heliantheae</taxon>
        <taxon>Ambrosia</taxon>
    </lineage>
</organism>
<name>CEP01_AMBAR</name>
<reference evidence="18" key="1">
    <citation type="journal article" date="2015" name="J. Allergy Clin. Immunol.">
        <title>Identification of the cysteine protease Amb a 11 as a novel major allergen from short ragweed.</title>
        <authorList>
            <person name="Bouley J."/>
            <person name="Groeme R."/>
            <person name="Le Mignon M."/>
            <person name="Jain K."/>
            <person name="Chabre H."/>
            <person name="Bordas-Le Floch V."/>
            <person name="Couret M.N."/>
            <person name="Bussieres L."/>
            <person name="Lautrette A."/>
            <person name="Naveau M."/>
            <person name="Baron-Bodo V."/>
            <person name="Lombardi V."/>
            <person name="Mascarell L."/>
            <person name="Batard T."/>
            <person name="Nony E."/>
            <person name="Moingeon P."/>
        </authorList>
    </citation>
    <scope>NUCLEOTIDE SEQUENCE [MRNA]</scope>
    <scope>PROTEIN SEQUENCE OF 109-301 AND 310-370</scope>
    <scope>3D-STRUCTURE MODELING</scope>
    <scope>FUNCTION</scope>
    <scope>CATALYTIC ACTIVITY</scope>
    <scope>ACTIVITY REGULATION</scope>
    <scope>TISSUE SPECIFICITY</scope>
    <scope>IDENTIFICATION BY MASS SPECTROMETRY</scope>
    <scope>ALLERGEN</scope>
    <scope>GLYCOSYLATION AT ASN-127</scope>
    <scope>CIRCULAR DICHROISM ANALYSIS</scope>
    <source>
        <tissue evidence="11">Pollen</tissue>
    </source>
</reference>
<reference key="2">
    <citation type="journal article" date="2022" name="Protein J.">
        <title>Design of an Epitope-Based Peptide Vaccine Against the Major Allergen Amb a 11 Using Immunoinformatic Approaches.</title>
        <authorList>
            <person name="Moten D."/>
            <person name="Kolchakova D."/>
            <person name="Todorov K."/>
            <person name="Mladenova T."/>
            <person name="Dzhambazov B."/>
        </authorList>
    </citation>
    <scope>ALLERGEN</scope>
    <scope>REGIONS</scope>
</reference>
<reference key="3">
    <citation type="journal article" date="2023" name="Biomolecules">
        <title>Ragweed Major Allergen Amb a 11 Recombinant Production and Clinical Implications.</title>
        <authorList>
            <person name="Tamas T.P."/>
            <person name="Buzan M.R."/>
            <person name="Zbircea L.E."/>
            <person name="Cotarca M.D."/>
            <person name="Grijincu M."/>
            <person name="Paunescu V."/>
            <person name="Panaitescu C."/>
            <person name="Chen K.W."/>
        </authorList>
    </citation>
    <scope>ALLERGEN</scope>
</reference>
<reference evidence="19 20" key="4">
    <citation type="journal article" date="2016" name="J. Biol. Chem.">
        <title>Structural and Functional Characterization of the Major Allergen Amb a 11 from Short Ragweed Pollen.</title>
        <authorList>
            <person name="Groeme R."/>
            <person name="Airouche S."/>
            <person name="Kopecny D."/>
            <person name="Jaekel J."/>
            <person name="Savko M."/>
            <person name="Berjont N."/>
            <person name="Bussieres L."/>
            <person name="Le Mignon M."/>
            <person name="Jagic F."/>
            <person name="Zieglmayer P."/>
            <person name="Baron-Bodo V."/>
            <person name="Bordas-Le Floch V."/>
            <person name="Mascarell L."/>
            <person name="Briozzo P."/>
            <person name="Moingeon P."/>
        </authorList>
    </citation>
    <scope>X-RAY CRYSTALLOGRAPHY (2.05 ANGSTROMS) OF 23-386</scope>
    <scope>FUNCTION</scope>
    <scope>CATALYTIC ACTIVITY</scope>
    <scope>ACTIVITY REGULATION</scope>
    <scope>BIOPHYSICOCHEMICAL PROPERTIES</scope>
    <scope>SUBUNIT</scope>
    <scope>CLEAVAGE</scope>
    <scope>ALLERGEN</scope>
    <scope>ACTIVE SITE</scope>
    <scope>DISULFIDE BONDS</scope>
    <scope>MUTAGENESIS OF CYS-155 AND 371-LYS--LEU-386</scope>
</reference>
<evidence type="ECO:0000255" key="1"/>
<evidence type="ECO:0000255" key="2">
    <source>
        <dbReference type="PROSITE-ProRule" id="PRU00498"/>
    </source>
</evidence>
<evidence type="ECO:0000255" key="3">
    <source>
        <dbReference type="PROSITE-ProRule" id="PRU10088"/>
    </source>
</evidence>
<evidence type="ECO:0000255" key="4">
    <source>
        <dbReference type="PROSITE-ProRule" id="PRU10089"/>
    </source>
</evidence>
<evidence type="ECO:0000255" key="5">
    <source>
        <dbReference type="PROSITE-ProRule" id="PRU10090"/>
    </source>
</evidence>
<evidence type="ECO:0000256" key="6">
    <source>
        <dbReference type="SAM" id="MobiDB-lite"/>
    </source>
</evidence>
<evidence type="ECO:0000269" key="7">
    <source>
    </source>
</evidence>
<evidence type="ECO:0000269" key="8">
    <source>
    </source>
</evidence>
<evidence type="ECO:0000269" key="9">
    <source>
    </source>
</evidence>
<evidence type="ECO:0000269" key="10">
    <source>
    </source>
</evidence>
<evidence type="ECO:0000303" key="11">
    <source>
    </source>
</evidence>
<evidence type="ECO:0000303" key="12">
    <source>
    </source>
</evidence>
<evidence type="ECO:0000303" key="13">
    <source>
    </source>
</evidence>
<evidence type="ECO:0000303" key="14">
    <source>
    </source>
</evidence>
<evidence type="ECO:0000305" key="15"/>
<evidence type="ECO:0000305" key="16">
    <source>
    </source>
</evidence>
<evidence type="ECO:0000305" key="17">
    <source>
    </source>
</evidence>
<evidence type="ECO:0000312" key="18">
    <source>
        <dbReference type="EMBL" id="AHA56102.1"/>
    </source>
</evidence>
<evidence type="ECO:0007744" key="19">
    <source>
        <dbReference type="PDB" id="5EF4"/>
    </source>
</evidence>
<evidence type="ECO:0007744" key="20">
    <source>
        <dbReference type="PDB" id="5EGW"/>
    </source>
</evidence>
<evidence type="ECO:0007829" key="21">
    <source>
        <dbReference type="PDB" id="5EF4"/>
    </source>
</evidence>
<evidence type="ECO:0007829" key="22">
    <source>
        <dbReference type="PDB" id="5EGW"/>
    </source>
</evidence>
<proteinExistence type="evidence at protein level"/>